<name>PDXT_ARCFU</name>
<dbReference type="EC" id="4.3.3.6" evidence="1"/>
<dbReference type="EC" id="3.5.1.2" evidence="1"/>
<dbReference type="EMBL" id="AE000782">
    <property type="protein sequence ID" value="AAB90721.1"/>
    <property type="molecule type" value="Genomic_DNA"/>
</dbReference>
<dbReference type="PIR" id="E69313">
    <property type="entry name" value="E69313"/>
</dbReference>
<dbReference type="RefSeq" id="WP_010878016.1">
    <property type="nucleotide sequence ID" value="NC_000917.1"/>
</dbReference>
<dbReference type="SMR" id="O29741"/>
<dbReference type="STRING" id="224325.AF_0509"/>
<dbReference type="MEROPS" id="C26.A32"/>
<dbReference type="PaxDb" id="224325-AF_0509"/>
<dbReference type="EnsemblBacteria" id="AAB90721">
    <property type="protein sequence ID" value="AAB90721"/>
    <property type="gene ID" value="AF_0509"/>
</dbReference>
<dbReference type="GeneID" id="24794049"/>
<dbReference type="KEGG" id="afu:AF_0509"/>
<dbReference type="eggNOG" id="arCOG00034">
    <property type="taxonomic scope" value="Archaea"/>
</dbReference>
<dbReference type="HOGENOM" id="CLU_069674_2_0_2"/>
<dbReference type="OrthoDB" id="26717at2157"/>
<dbReference type="PhylomeDB" id="O29741"/>
<dbReference type="UniPathway" id="UPA00245"/>
<dbReference type="Proteomes" id="UP000002199">
    <property type="component" value="Chromosome"/>
</dbReference>
<dbReference type="GO" id="GO:0005829">
    <property type="term" value="C:cytosol"/>
    <property type="evidence" value="ECO:0007669"/>
    <property type="project" value="TreeGrafter"/>
</dbReference>
<dbReference type="GO" id="GO:1903600">
    <property type="term" value="C:glutaminase complex"/>
    <property type="evidence" value="ECO:0007669"/>
    <property type="project" value="TreeGrafter"/>
</dbReference>
<dbReference type="GO" id="GO:0004359">
    <property type="term" value="F:glutaminase activity"/>
    <property type="evidence" value="ECO:0007669"/>
    <property type="project" value="UniProtKB-UniRule"/>
</dbReference>
<dbReference type="GO" id="GO:0036381">
    <property type="term" value="F:pyridoxal 5'-phosphate synthase (glutamine hydrolysing) activity"/>
    <property type="evidence" value="ECO:0007669"/>
    <property type="project" value="UniProtKB-UniRule"/>
</dbReference>
<dbReference type="GO" id="GO:0006543">
    <property type="term" value="P:glutamine catabolic process"/>
    <property type="evidence" value="ECO:0007669"/>
    <property type="project" value="UniProtKB-UniRule"/>
</dbReference>
<dbReference type="GO" id="GO:0042823">
    <property type="term" value="P:pyridoxal phosphate biosynthetic process"/>
    <property type="evidence" value="ECO:0007669"/>
    <property type="project" value="UniProtKB-UniRule"/>
</dbReference>
<dbReference type="GO" id="GO:0008614">
    <property type="term" value="P:pyridoxine metabolic process"/>
    <property type="evidence" value="ECO:0007669"/>
    <property type="project" value="TreeGrafter"/>
</dbReference>
<dbReference type="CDD" id="cd01749">
    <property type="entry name" value="GATase1_PB"/>
    <property type="match status" value="1"/>
</dbReference>
<dbReference type="FunFam" id="3.40.50.880:FF:000041">
    <property type="entry name" value="Glutamine amidotransferase subunit pdxT, putative"/>
    <property type="match status" value="1"/>
</dbReference>
<dbReference type="Gene3D" id="3.40.50.880">
    <property type="match status" value="1"/>
</dbReference>
<dbReference type="HAMAP" id="MF_01615">
    <property type="entry name" value="PdxT"/>
    <property type="match status" value="1"/>
</dbReference>
<dbReference type="InterPro" id="IPR029062">
    <property type="entry name" value="Class_I_gatase-like"/>
</dbReference>
<dbReference type="InterPro" id="IPR002161">
    <property type="entry name" value="PdxT/SNO"/>
</dbReference>
<dbReference type="InterPro" id="IPR021196">
    <property type="entry name" value="PdxT/SNO_CS"/>
</dbReference>
<dbReference type="NCBIfam" id="TIGR03800">
    <property type="entry name" value="PLP_synth_Pdx2"/>
    <property type="match status" value="1"/>
</dbReference>
<dbReference type="PANTHER" id="PTHR31559">
    <property type="entry name" value="PYRIDOXAL 5'-PHOSPHATE SYNTHASE SUBUNIT SNO"/>
    <property type="match status" value="1"/>
</dbReference>
<dbReference type="PANTHER" id="PTHR31559:SF0">
    <property type="entry name" value="PYRIDOXAL 5'-PHOSPHATE SYNTHASE SUBUNIT SNO1-RELATED"/>
    <property type="match status" value="1"/>
</dbReference>
<dbReference type="Pfam" id="PF01174">
    <property type="entry name" value="SNO"/>
    <property type="match status" value="1"/>
</dbReference>
<dbReference type="PIRSF" id="PIRSF005639">
    <property type="entry name" value="Glut_amidoT_SNO"/>
    <property type="match status" value="1"/>
</dbReference>
<dbReference type="SUPFAM" id="SSF52317">
    <property type="entry name" value="Class I glutamine amidotransferase-like"/>
    <property type="match status" value="1"/>
</dbReference>
<dbReference type="PROSITE" id="PS01236">
    <property type="entry name" value="PDXT_SNO_1"/>
    <property type="match status" value="1"/>
</dbReference>
<dbReference type="PROSITE" id="PS51130">
    <property type="entry name" value="PDXT_SNO_2"/>
    <property type="match status" value="1"/>
</dbReference>
<keyword id="KW-0315">Glutamine amidotransferase</keyword>
<keyword id="KW-0378">Hydrolase</keyword>
<keyword id="KW-0456">Lyase</keyword>
<keyword id="KW-0663">Pyridoxal phosphate</keyword>
<keyword id="KW-1185">Reference proteome</keyword>
<organism>
    <name type="scientific">Archaeoglobus fulgidus (strain ATCC 49558 / DSM 4304 / JCM 9628 / NBRC 100126 / VC-16)</name>
    <dbReference type="NCBI Taxonomy" id="224325"/>
    <lineage>
        <taxon>Archaea</taxon>
        <taxon>Methanobacteriati</taxon>
        <taxon>Methanobacteriota</taxon>
        <taxon>Archaeoglobi</taxon>
        <taxon>Archaeoglobales</taxon>
        <taxon>Archaeoglobaceae</taxon>
        <taxon>Archaeoglobus</taxon>
    </lineage>
</organism>
<sequence>MKVAVVGVQGDVEEHVLATKRALKRLGIDGEVVATRRRGVVSRSDAVILPGGESTTISKLIFSDGIADEILQLAEEGKPVMGTCAGLILLSKYGDEQVEKTNTKLLGLLDAKVKRNAFGRQRESFQVPLDVKYVGKFDAVFIRAPAITEVGKDVEVLATFENLIVAARQKNVLGLAFHPELTDDTRIHEFFLKLGETS</sequence>
<protein>
    <recommendedName>
        <fullName evidence="1">Pyridoxal 5'-phosphate synthase subunit PdxT</fullName>
        <ecNumber evidence="1">4.3.3.6</ecNumber>
    </recommendedName>
    <alternativeName>
        <fullName evidence="1">Pdx2</fullName>
    </alternativeName>
    <alternativeName>
        <fullName evidence="1">Pyridoxal 5'-phosphate synthase glutaminase subunit</fullName>
        <ecNumber evidence="1">3.5.1.2</ecNumber>
    </alternativeName>
</protein>
<evidence type="ECO:0000255" key="1">
    <source>
        <dbReference type="HAMAP-Rule" id="MF_01615"/>
    </source>
</evidence>
<proteinExistence type="inferred from homology"/>
<gene>
    <name evidence="1" type="primary">pdxT</name>
    <name type="ordered locus">AF_0509</name>
</gene>
<reference key="1">
    <citation type="journal article" date="1997" name="Nature">
        <title>The complete genome sequence of the hyperthermophilic, sulphate-reducing archaeon Archaeoglobus fulgidus.</title>
        <authorList>
            <person name="Klenk H.-P."/>
            <person name="Clayton R.A."/>
            <person name="Tomb J.-F."/>
            <person name="White O."/>
            <person name="Nelson K.E."/>
            <person name="Ketchum K.A."/>
            <person name="Dodson R.J."/>
            <person name="Gwinn M.L."/>
            <person name="Hickey E.K."/>
            <person name="Peterson J.D."/>
            <person name="Richardson D.L."/>
            <person name="Kerlavage A.R."/>
            <person name="Graham D.E."/>
            <person name="Kyrpides N.C."/>
            <person name="Fleischmann R.D."/>
            <person name="Quackenbush J."/>
            <person name="Lee N.H."/>
            <person name="Sutton G.G."/>
            <person name="Gill S.R."/>
            <person name="Kirkness E.F."/>
            <person name="Dougherty B.A."/>
            <person name="McKenney K."/>
            <person name="Adams M.D."/>
            <person name="Loftus B.J."/>
            <person name="Peterson S.N."/>
            <person name="Reich C.I."/>
            <person name="McNeil L.K."/>
            <person name="Badger J.H."/>
            <person name="Glodek A."/>
            <person name="Zhou L."/>
            <person name="Overbeek R."/>
            <person name="Gocayne J.D."/>
            <person name="Weidman J.F."/>
            <person name="McDonald L.A."/>
            <person name="Utterback T.R."/>
            <person name="Cotton M.D."/>
            <person name="Spriggs T."/>
            <person name="Artiach P."/>
            <person name="Kaine B.P."/>
            <person name="Sykes S.M."/>
            <person name="Sadow P.W."/>
            <person name="D'Andrea K.P."/>
            <person name="Bowman C."/>
            <person name="Fujii C."/>
            <person name="Garland S.A."/>
            <person name="Mason T.M."/>
            <person name="Olsen G.J."/>
            <person name="Fraser C.M."/>
            <person name="Smith H.O."/>
            <person name="Woese C.R."/>
            <person name="Venter J.C."/>
        </authorList>
    </citation>
    <scope>NUCLEOTIDE SEQUENCE [LARGE SCALE GENOMIC DNA]</scope>
    <source>
        <strain>ATCC 49558 / DSM 4304 / JCM 9628 / NBRC 100126 / VC-16</strain>
    </source>
</reference>
<accession>O29741</accession>
<comment type="function">
    <text evidence="1">Catalyzes the hydrolysis of glutamine to glutamate and ammonia as part of the biosynthesis of pyridoxal 5'-phosphate. The resulting ammonia molecule is channeled to the active site of PdxS.</text>
</comment>
<comment type="catalytic activity">
    <reaction evidence="1">
        <text>aldehydo-D-ribose 5-phosphate + D-glyceraldehyde 3-phosphate + L-glutamine = pyridoxal 5'-phosphate + L-glutamate + phosphate + 3 H2O + H(+)</text>
        <dbReference type="Rhea" id="RHEA:31507"/>
        <dbReference type="ChEBI" id="CHEBI:15377"/>
        <dbReference type="ChEBI" id="CHEBI:15378"/>
        <dbReference type="ChEBI" id="CHEBI:29985"/>
        <dbReference type="ChEBI" id="CHEBI:43474"/>
        <dbReference type="ChEBI" id="CHEBI:58273"/>
        <dbReference type="ChEBI" id="CHEBI:58359"/>
        <dbReference type="ChEBI" id="CHEBI:59776"/>
        <dbReference type="ChEBI" id="CHEBI:597326"/>
        <dbReference type="EC" id="4.3.3.6"/>
    </reaction>
</comment>
<comment type="catalytic activity">
    <reaction evidence="1">
        <text>L-glutamine + H2O = L-glutamate + NH4(+)</text>
        <dbReference type="Rhea" id="RHEA:15889"/>
        <dbReference type="ChEBI" id="CHEBI:15377"/>
        <dbReference type="ChEBI" id="CHEBI:28938"/>
        <dbReference type="ChEBI" id="CHEBI:29985"/>
        <dbReference type="ChEBI" id="CHEBI:58359"/>
        <dbReference type="EC" id="3.5.1.2"/>
    </reaction>
</comment>
<comment type="pathway">
    <text evidence="1">Cofactor biosynthesis; pyridoxal 5'-phosphate biosynthesis.</text>
</comment>
<comment type="subunit">
    <text evidence="1">In the presence of PdxS, forms a dodecamer of heterodimers. Only shows activity in the heterodimer.</text>
</comment>
<comment type="similarity">
    <text evidence="1">Belongs to the glutaminase PdxT/SNO family.</text>
</comment>
<feature type="chain" id="PRO_0000135675" description="Pyridoxal 5'-phosphate synthase subunit PdxT">
    <location>
        <begin position="1"/>
        <end position="198"/>
    </location>
</feature>
<feature type="active site" description="Nucleophile" evidence="1">
    <location>
        <position position="84"/>
    </location>
</feature>
<feature type="active site" description="Charge relay system" evidence="1">
    <location>
        <position position="178"/>
    </location>
</feature>
<feature type="active site" description="Charge relay system" evidence="1">
    <location>
        <position position="180"/>
    </location>
</feature>
<feature type="binding site" evidence="1">
    <location>
        <begin position="52"/>
        <end position="54"/>
    </location>
    <ligand>
        <name>L-glutamine</name>
        <dbReference type="ChEBI" id="CHEBI:58359"/>
    </ligand>
</feature>
<feature type="binding site" evidence="1">
    <location>
        <position position="115"/>
    </location>
    <ligand>
        <name>L-glutamine</name>
        <dbReference type="ChEBI" id="CHEBI:58359"/>
    </ligand>
</feature>
<feature type="binding site" evidence="1">
    <location>
        <begin position="142"/>
        <end position="143"/>
    </location>
    <ligand>
        <name>L-glutamine</name>
        <dbReference type="ChEBI" id="CHEBI:58359"/>
    </ligand>
</feature>